<evidence type="ECO:0000255" key="1">
    <source>
        <dbReference type="HAMAP-Rule" id="MF_00129"/>
    </source>
</evidence>
<gene>
    <name evidence="1" type="primary">mnmG</name>
    <name evidence="1" type="synonym">gidA</name>
    <name type="ordered locus">Cj1188c</name>
</gene>
<sequence length="619" mass="69172">MFDVIVIGGGHAGVEASAAAARMGKKTLLLTTLIEQIGAASCNPAIGGLAKGHLVKELDAMGGLMGEITDEAGIQFRILNESKGVAVQGSRAQIDMDKYRIIARNKLLKLPNLEISQEQASVLIVENDEVKGVKTNLENIYFAKKVILTTGTFLNGLIHVGENKLQAGRVGELASVNLGNYLQTLGLKMGRLKTGTCPRVDAKSIDFSVLEIQDGDVNPKAFSFRSRNFNPTQLPCYIARTNTTTHEIIKNNFYRAPLFTGQIEGVGPRYCPSIEDKINRFSDKESHHLFIEPQTIDATEYYINGFSTSLPYEVQTQMLRSVEGFENAKITRFGYAIEYDYIEPTELKHTLELKKIKNLYCAGQINGTTGYEEAAAQGFMAGINASLSIDMKEPLILRRDEAYIGVLIDDLVVKGTKEPYRMFTSRAEFRLLLREENAILRLGKYGYDLGLLSEQDFTYIQNIANNLQKGLEFLLSKEFTPNNQNNAFLESLGEDKISSIVNLQKIVARASFDIEKLKKLDPIFETMDHYSLREILNEAKYYHYISMQKAQVEKMKNLSELKIPENFDFKSVSGLSNEVVEKLNHHKPPTIFAASQISGITPAALDILQIYIKMQKKKA</sequence>
<dbReference type="EMBL" id="AL111168">
    <property type="protein sequence ID" value="CAL35303.1"/>
    <property type="molecule type" value="Genomic_DNA"/>
</dbReference>
<dbReference type="PIR" id="F81324">
    <property type="entry name" value="F81324"/>
</dbReference>
<dbReference type="RefSeq" id="WP_002864546.1">
    <property type="nucleotide sequence ID" value="NZ_SZUC01000001.1"/>
</dbReference>
<dbReference type="RefSeq" id="YP_002344579.1">
    <property type="nucleotide sequence ID" value="NC_002163.1"/>
</dbReference>
<dbReference type="SMR" id="Q9PNA7"/>
<dbReference type="IntAct" id="Q9PNA7">
    <property type="interactions" value="12"/>
</dbReference>
<dbReference type="STRING" id="192222.Cj1188c"/>
<dbReference type="PaxDb" id="192222-Cj1188c"/>
<dbReference type="EnsemblBacteria" id="CAL35303">
    <property type="protein sequence ID" value="CAL35303"/>
    <property type="gene ID" value="Cj1188c"/>
</dbReference>
<dbReference type="GeneID" id="905478"/>
<dbReference type="KEGG" id="cje:Cj1188c"/>
<dbReference type="PATRIC" id="fig|192222.6.peg.1169"/>
<dbReference type="eggNOG" id="COG0445">
    <property type="taxonomic scope" value="Bacteria"/>
</dbReference>
<dbReference type="HOGENOM" id="CLU_007831_2_2_7"/>
<dbReference type="OrthoDB" id="9815560at2"/>
<dbReference type="Proteomes" id="UP000000799">
    <property type="component" value="Chromosome"/>
</dbReference>
<dbReference type="GO" id="GO:0005829">
    <property type="term" value="C:cytosol"/>
    <property type="evidence" value="ECO:0007669"/>
    <property type="project" value="TreeGrafter"/>
</dbReference>
<dbReference type="GO" id="GO:0050660">
    <property type="term" value="F:flavin adenine dinucleotide binding"/>
    <property type="evidence" value="ECO:0007669"/>
    <property type="project" value="UniProtKB-UniRule"/>
</dbReference>
<dbReference type="GO" id="GO:0030488">
    <property type="term" value="P:tRNA methylation"/>
    <property type="evidence" value="ECO:0007669"/>
    <property type="project" value="TreeGrafter"/>
</dbReference>
<dbReference type="GO" id="GO:0002098">
    <property type="term" value="P:tRNA wobble uridine modification"/>
    <property type="evidence" value="ECO:0007669"/>
    <property type="project" value="InterPro"/>
</dbReference>
<dbReference type="FunFam" id="1.10.150.570:FF:000001">
    <property type="entry name" value="tRNA uridine 5-carboxymethylaminomethyl modification enzyme MnmG"/>
    <property type="match status" value="1"/>
</dbReference>
<dbReference type="FunFam" id="3.50.50.60:FF:000002">
    <property type="entry name" value="tRNA uridine 5-carboxymethylaminomethyl modification enzyme MnmG"/>
    <property type="match status" value="1"/>
</dbReference>
<dbReference type="Gene3D" id="3.50.50.60">
    <property type="entry name" value="FAD/NAD(P)-binding domain"/>
    <property type="match status" value="2"/>
</dbReference>
<dbReference type="Gene3D" id="1.10.150.570">
    <property type="entry name" value="GidA associated domain, C-terminal subdomain"/>
    <property type="match status" value="1"/>
</dbReference>
<dbReference type="Gene3D" id="1.10.10.1800">
    <property type="entry name" value="tRNA uridine 5-carboxymethylaminomethyl modification enzyme MnmG/GidA"/>
    <property type="match status" value="1"/>
</dbReference>
<dbReference type="HAMAP" id="MF_00129">
    <property type="entry name" value="MnmG_GidA"/>
    <property type="match status" value="1"/>
</dbReference>
<dbReference type="InterPro" id="IPR036188">
    <property type="entry name" value="FAD/NAD-bd_sf"/>
</dbReference>
<dbReference type="InterPro" id="IPR049312">
    <property type="entry name" value="GIDA_C_N"/>
</dbReference>
<dbReference type="InterPro" id="IPR004416">
    <property type="entry name" value="MnmG"/>
</dbReference>
<dbReference type="InterPro" id="IPR002218">
    <property type="entry name" value="MnmG-rel"/>
</dbReference>
<dbReference type="InterPro" id="IPR020595">
    <property type="entry name" value="MnmG-rel_CS"/>
</dbReference>
<dbReference type="InterPro" id="IPR026904">
    <property type="entry name" value="MnmG_C"/>
</dbReference>
<dbReference type="InterPro" id="IPR047001">
    <property type="entry name" value="MnmG_C_subdom"/>
</dbReference>
<dbReference type="InterPro" id="IPR044920">
    <property type="entry name" value="MnmG_C_subdom_sf"/>
</dbReference>
<dbReference type="InterPro" id="IPR040131">
    <property type="entry name" value="MnmG_N"/>
</dbReference>
<dbReference type="NCBIfam" id="TIGR00136">
    <property type="entry name" value="mnmG_gidA"/>
    <property type="match status" value="1"/>
</dbReference>
<dbReference type="PANTHER" id="PTHR11806">
    <property type="entry name" value="GLUCOSE INHIBITED DIVISION PROTEIN A"/>
    <property type="match status" value="1"/>
</dbReference>
<dbReference type="PANTHER" id="PTHR11806:SF0">
    <property type="entry name" value="PROTEIN MTO1 HOMOLOG, MITOCHONDRIAL"/>
    <property type="match status" value="1"/>
</dbReference>
<dbReference type="Pfam" id="PF01134">
    <property type="entry name" value="GIDA"/>
    <property type="match status" value="1"/>
</dbReference>
<dbReference type="Pfam" id="PF21680">
    <property type="entry name" value="GIDA_C_1st"/>
    <property type="match status" value="1"/>
</dbReference>
<dbReference type="Pfam" id="PF13932">
    <property type="entry name" value="SAM_GIDA_C"/>
    <property type="match status" value="1"/>
</dbReference>
<dbReference type="SMART" id="SM01228">
    <property type="entry name" value="GIDA_assoc_3"/>
    <property type="match status" value="1"/>
</dbReference>
<dbReference type="SUPFAM" id="SSF51905">
    <property type="entry name" value="FAD/NAD(P)-binding domain"/>
    <property type="match status" value="1"/>
</dbReference>
<dbReference type="PROSITE" id="PS01280">
    <property type="entry name" value="GIDA_1"/>
    <property type="match status" value="1"/>
</dbReference>
<dbReference type="PROSITE" id="PS01281">
    <property type="entry name" value="GIDA_2"/>
    <property type="match status" value="1"/>
</dbReference>
<organism>
    <name type="scientific">Campylobacter jejuni subsp. jejuni serotype O:2 (strain ATCC 700819 / NCTC 11168)</name>
    <dbReference type="NCBI Taxonomy" id="192222"/>
    <lineage>
        <taxon>Bacteria</taxon>
        <taxon>Pseudomonadati</taxon>
        <taxon>Campylobacterota</taxon>
        <taxon>Epsilonproteobacteria</taxon>
        <taxon>Campylobacterales</taxon>
        <taxon>Campylobacteraceae</taxon>
        <taxon>Campylobacter</taxon>
    </lineage>
</organism>
<accession>Q9PNA7</accession>
<accession>Q0P968</accession>
<feature type="chain" id="PRO_0000117077" description="tRNA uridine 5-carboxymethylaminomethyl modification enzyme MnmG">
    <location>
        <begin position="1"/>
        <end position="619"/>
    </location>
</feature>
<feature type="binding site" evidence="1">
    <location>
        <begin position="8"/>
        <end position="13"/>
    </location>
    <ligand>
        <name>FAD</name>
        <dbReference type="ChEBI" id="CHEBI:57692"/>
    </ligand>
</feature>
<feature type="binding site" evidence="1">
    <location>
        <begin position="267"/>
        <end position="281"/>
    </location>
    <ligand>
        <name>NAD(+)</name>
        <dbReference type="ChEBI" id="CHEBI:57540"/>
    </ligand>
</feature>
<reference key="1">
    <citation type="journal article" date="2000" name="Nature">
        <title>The genome sequence of the food-borne pathogen Campylobacter jejuni reveals hypervariable sequences.</title>
        <authorList>
            <person name="Parkhill J."/>
            <person name="Wren B.W."/>
            <person name="Mungall K.L."/>
            <person name="Ketley J.M."/>
            <person name="Churcher C.M."/>
            <person name="Basham D."/>
            <person name="Chillingworth T."/>
            <person name="Davies R.M."/>
            <person name="Feltwell T."/>
            <person name="Holroyd S."/>
            <person name="Jagels K."/>
            <person name="Karlyshev A.V."/>
            <person name="Moule S."/>
            <person name="Pallen M.J."/>
            <person name="Penn C.W."/>
            <person name="Quail M.A."/>
            <person name="Rajandream M.A."/>
            <person name="Rutherford K.M."/>
            <person name="van Vliet A.H.M."/>
            <person name="Whitehead S."/>
            <person name="Barrell B.G."/>
        </authorList>
    </citation>
    <scope>NUCLEOTIDE SEQUENCE [LARGE SCALE GENOMIC DNA]</scope>
    <source>
        <strain>ATCC 700819 / NCTC 11168</strain>
    </source>
</reference>
<protein>
    <recommendedName>
        <fullName evidence="1">tRNA uridine 5-carboxymethylaminomethyl modification enzyme MnmG</fullName>
    </recommendedName>
    <alternativeName>
        <fullName evidence="1">Glucose-inhibited division protein A</fullName>
    </alternativeName>
</protein>
<comment type="function">
    <text evidence="1">NAD-binding protein involved in the addition of a carboxymethylaminomethyl (cmnm) group at the wobble position (U34) of certain tRNAs, forming tRNA-cmnm(5)s(2)U34.</text>
</comment>
<comment type="cofactor">
    <cofactor evidence="1">
        <name>FAD</name>
        <dbReference type="ChEBI" id="CHEBI:57692"/>
    </cofactor>
</comment>
<comment type="subunit">
    <text evidence="1">Homodimer. Heterotetramer of two MnmE and two MnmG subunits.</text>
</comment>
<comment type="subcellular location">
    <subcellularLocation>
        <location evidence="1">Cytoplasm</location>
    </subcellularLocation>
</comment>
<comment type="similarity">
    <text evidence="1">Belongs to the MnmG family.</text>
</comment>
<keyword id="KW-0963">Cytoplasm</keyword>
<keyword id="KW-0274">FAD</keyword>
<keyword id="KW-0285">Flavoprotein</keyword>
<keyword id="KW-0520">NAD</keyword>
<keyword id="KW-1185">Reference proteome</keyword>
<keyword id="KW-0819">tRNA processing</keyword>
<name>MNMG_CAMJE</name>
<proteinExistence type="inferred from homology"/>